<keyword id="KW-1185">Reference proteome</keyword>
<dbReference type="EMBL" id="M18049">
    <property type="protein sequence ID" value="AAA89178.1"/>
    <property type="molecule type" value="Genomic_RNA"/>
</dbReference>
<dbReference type="KEGG" id="vg:956512"/>
<dbReference type="Proteomes" id="UP000007248">
    <property type="component" value="Genome"/>
</dbReference>
<dbReference type="InterPro" id="IPR004284">
    <property type="entry name" value="Birna_VP5"/>
</dbReference>
<dbReference type="Pfam" id="PF03042">
    <property type="entry name" value="Birna_VP5"/>
    <property type="match status" value="1"/>
</dbReference>
<protein>
    <recommendedName>
        <fullName>Protein VP5</fullName>
    </recommendedName>
</protein>
<organismHost>
    <name type="scientific">Oncorhynchus mykiss</name>
    <name type="common">Rainbow trout</name>
    <name type="synonym">Salmo gairdneri</name>
    <dbReference type="NCBI Taxonomy" id="8022"/>
</organismHost>
<organismHost>
    <name type="scientific">Salmo</name>
    <dbReference type="NCBI Taxonomy" id="8028"/>
</organismHost>
<gene>
    <name type="primary">VP5</name>
</gene>
<proteinExistence type="inferred from homology"/>
<sequence length="148" mass="17350">MAKALSNKPTNILIYMNHEHIQGNRNLLEIHYASREWASKHSGRHNREAYTKTRDLVIQLRGIRIRKWASCLLPRSSWIQGRCPLQVESEPDGTRIRPVARDVTGPKEGIQLRETDLTEIRHPELNPSRWSVCTQWDPERCHLRRKSV</sequence>
<comment type="function">
    <text evidence="1">VP5 is not required for viral replication in vivo and its absence does not alter the virulence characteristics of the virus or the establishment of persistent IPNV infection.</text>
</comment>
<comment type="similarity">
    <text evidence="2">Belongs to the avibirnavirus/aquabirnavirus VP5 protein family.</text>
</comment>
<name>VP5_IPNVJ</name>
<evidence type="ECO:0000250" key="1"/>
<evidence type="ECO:0000305" key="2"/>
<accession>P22931</accession>
<organism>
    <name type="scientific">Infectious pancreatic necrosis virus (strain Jasper)</name>
    <name type="common">IPNV</name>
    <dbReference type="NCBI Taxonomy" id="11003"/>
    <lineage>
        <taxon>Viruses</taxon>
        <taxon>Riboviria</taxon>
        <taxon>Orthornavirae</taxon>
        <taxon>Birnaviridae</taxon>
        <taxon>Aquabirnavirus</taxon>
        <taxon>Aquabirnavirus salmonidae</taxon>
    </lineage>
</organism>
<reference key="1">
    <citation type="journal article" date="1986" name="Nucleic Acids Res.">
        <title>The nucleotide sequence of infectious pancreatic necrosis virus (IPNV) dsRNA segment A reveals one large ORF encoding a precursor polyprotein.</title>
        <authorList>
            <person name="Duncan R."/>
            <person name="Dobos P."/>
        </authorList>
    </citation>
    <scope>NUCLEOTIDE SEQUENCE [GENOMIC RNA]</scope>
</reference>
<feature type="chain" id="PRO_0000221969" description="Protein VP5">
    <location>
        <begin position="1"/>
        <end position="148"/>
    </location>
</feature>